<proteinExistence type="inferred from homology"/>
<gene>
    <name evidence="1" type="primary">TRM5</name>
    <name type="ORF">SNOG_04291</name>
</gene>
<feature type="transit peptide" description="Mitochondrion" evidence="1">
    <location>
        <begin position="1"/>
        <end position="9"/>
    </location>
</feature>
<feature type="chain" id="PRO_0000414169" description="tRNA (guanine(37)-N(1))-methyltransferase">
    <location>
        <begin position="10"/>
        <end position="441"/>
    </location>
</feature>
<feature type="binding site" evidence="1">
    <location>
        <position position="221"/>
    </location>
    <ligand>
        <name>S-adenosyl-L-methionine</name>
        <dbReference type="ChEBI" id="CHEBI:59789"/>
    </ligand>
</feature>
<feature type="binding site" evidence="1">
    <location>
        <begin position="248"/>
        <end position="249"/>
    </location>
    <ligand>
        <name>S-adenosyl-L-methionine</name>
        <dbReference type="ChEBI" id="CHEBI:59789"/>
    </ligand>
</feature>
<feature type="binding site" evidence="1">
    <location>
        <begin position="276"/>
        <end position="277"/>
    </location>
    <ligand>
        <name>S-adenosyl-L-methionine</name>
        <dbReference type="ChEBI" id="CHEBI:59789"/>
    </ligand>
</feature>
<feature type="binding site" evidence="1">
    <location>
        <position position="331"/>
    </location>
    <ligand>
        <name>S-adenosyl-L-methionine</name>
        <dbReference type="ChEBI" id="CHEBI:59789"/>
    </ligand>
</feature>
<accession>Q0UVC3</accession>
<evidence type="ECO:0000255" key="1">
    <source>
        <dbReference type="HAMAP-Rule" id="MF_03152"/>
    </source>
</evidence>
<evidence type="ECO:0000305" key="2"/>
<comment type="function">
    <text evidence="1">Specifically methylates the N1 position of guanosine-37 in various cytoplasmic and mitochondrial tRNAs. Methylation is not dependent on the nature of the nucleoside 5' of the target nucleoside. This is the first step in the biosynthesis of wybutosine (yW), a modified base adjacent to the anticodon of tRNAs and required for accurate decoding.</text>
</comment>
<comment type="catalytic activity">
    <reaction evidence="1">
        <text>guanosine(37) in tRNA + S-adenosyl-L-methionine = N(1)-methylguanosine(37) in tRNA + S-adenosyl-L-homocysteine + H(+)</text>
        <dbReference type="Rhea" id="RHEA:36899"/>
        <dbReference type="Rhea" id="RHEA-COMP:10145"/>
        <dbReference type="Rhea" id="RHEA-COMP:10147"/>
        <dbReference type="ChEBI" id="CHEBI:15378"/>
        <dbReference type="ChEBI" id="CHEBI:57856"/>
        <dbReference type="ChEBI" id="CHEBI:59789"/>
        <dbReference type="ChEBI" id="CHEBI:73542"/>
        <dbReference type="ChEBI" id="CHEBI:74269"/>
        <dbReference type="EC" id="2.1.1.228"/>
    </reaction>
</comment>
<comment type="subunit">
    <text evidence="1">Monomer.</text>
</comment>
<comment type="subcellular location">
    <subcellularLocation>
        <location evidence="1">Mitochondrion matrix</location>
    </subcellularLocation>
    <subcellularLocation>
        <location evidence="1">Nucleus</location>
    </subcellularLocation>
    <subcellularLocation>
        <location evidence="1">Cytoplasm</location>
    </subcellularLocation>
    <text evidence="1">Predominantly in the mitochondria and in the nucleus.</text>
</comment>
<comment type="similarity">
    <text evidence="2">Belongs to the class I-like SAM-binding methyltransferase superfamily. TRM5/TYW2 family.</text>
</comment>
<name>TRM5_PHANO</name>
<reference key="1">
    <citation type="journal article" date="2007" name="Plant Cell">
        <title>Dothideomycete-plant interactions illuminated by genome sequencing and EST analysis of the wheat pathogen Stagonospora nodorum.</title>
        <authorList>
            <person name="Hane J.K."/>
            <person name="Lowe R.G.T."/>
            <person name="Solomon P.S."/>
            <person name="Tan K.-C."/>
            <person name="Schoch C.L."/>
            <person name="Spatafora J.W."/>
            <person name="Crous P.W."/>
            <person name="Kodira C.D."/>
            <person name="Birren B.W."/>
            <person name="Galagan J.E."/>
            <person name="Torriani S.F.F."/>
            <person name="McDonald B.A."/>
            <person name="Oliver R.P."/>
        </authorList>
    </citation>
    <scope>NUCLEOTIDE SEQUENCE [LARGE SCALE GENOMIC DNA]</scope>
    <source>
        <strain>SN15 / ATCC MYA-4574 / FGSC 10173</strain>
    </source>
</reference>
<protein>
    <recommendedName>
        <fullName evidence="1">tRNA (guanine(37)-N(1))-methyltransferase</fullName>
        <ecNumber evidence="1">2.1.1.228</ecNumber>
    </recommendedName>
    <alternativeName>
        <fullName evidence="1">M1G-methyltransferase</fullName>
    </alternativeName>
    <alternativeName>
        <fullName evidence="1">tRNA [GM37] methyltransferase</fullName>
    </alternativeName>
    <alternativeName>
        <fullName evidence="1">tRNA methyltransferase 5</fullName>
    </alternativeName>
</protein>
<organism>
    <name type="scientific">Phaeosphaeria nodorum (strain SN15 / ATCC MYA-4574 / FGSC 10173)</name>
    <name type="common">Glume blotch fungus</name>
    <name type="synonym">Parastagonospora nodorum</name>
    <dbReference type="NCBI Taxonomy" id="321614"/>
    <lineage>
        <taxon>Eukaryota</taxon>
        <taxon>Fungi</taxon>
        <taxon>Dikarya</taxon>
        <taxon>Ascomycota</taxon>
        <taxon>Pezizomycotina</taxon>
        <taxon>Dothideomycetes</taxon>
        <taxon>Pleosporomycetidae</taxon>
        <taxon>Pleosporales</taxon>
        <taxon>Pleosporineae</taxon>
        <taxon>Phaeosphaeriaceae</taxon>
        <taxon>Parastagonospora</taxon>
    </lineage>
</organism>
<sequence length="441" mass="49978">MFAPPAARAMKVLDRSFFKKTIPTSAARIFNAKDISRCRKELTASRDTLPNNRVDPIRPDVDSERAQKGGKCLVLRPEVVHNDRTTWSPKLRDLEQDGTLGVIPFQLDLDYDFFTYSEITSAIIPPPETKQDDEIPQGFALAGHVAHLNLRERYWPYKYLIADVLADKNPMVKTVINKLDNVGTENAFRTFQYEVLHGPDDMNVELREQGCTFKFDFAKARQYATIMAGVGPFAIPAGKKKCFVWANDLNPESYKSLEDNIRINKVGDFVTPRNTDGADFIRQSAIDLLKSERSIPIYPKVKFSRSAPPTQKPVPDRTLVQPRTFQHYVMNLPASAITFLPSFIGLYSNIPGLSIGEAKKLFAPHTQQKLPMIHVHCFSTKSDDNVAETKEICAEISRQLQCEMTPETPDVNIHDVRDVAPKKRMFCASFRLPEEVAFREI</sequence>
<keyword id="KW-0963">Cytoplasm</keyword>
<keyword id="KW-0489">Methyltransferase</keyword>
<keyword id="KW-0496">Mitochondrion</keyword>
<keyword id="KW-0539">Nucleus</keyword>
<keyword id="KW-0949">S-adenosyl-L-methionine</keyword>
<keyword id="KW-0808">Transferase</keyword>
<keyword id="KW-0809">Transit peptide</keyword>
<keyword id="KW-0819">tRNA processing</keyword>
<dbReference type="EC" id="2.1.1.228" evidence="1"/>
<dbReference type="EMBL" id="CH445330">
    <property type="protein sequence ID" value="EAT88051.1"/>
    <property type="molecule type" value="Genomic_DNA"/>
</dbReference>
<dbReference type="RefSeq" id="XP_001794708.1">
    <property type="nucleotide sequence ID" value="XM_001794656.1"/>
</dbReference>
<dbReference type="FunCoup" id="Q0UVC3">
    <property type="interactions" value="1028"/>
</dbReference>
<dbReference type="STRING" id="321614.Q0UVC3"/>
<dbReference type="EnsemblFungi" id="SNOT_04291">
    <property type="protein sequence ID" value="SNOT_04291"/>
    <property type="gene ID" value="SNOG_04291"/>
</dbReference>
<dbReference type="GeneID" id="5971576"/>
<dbReference type="KEGG" id="pno:SNOG_04291"/>
<dbReference type="VEuPathDB" id="FungiDB:JI435_042910"/>
<dbReference type="eggNOG" id="KOG2078">
    <property type="taxonomic scope" value="Eukaryota"/>
</dbReference>
<dbReference type="HOGENOM" id="CLU_022610_2_2_1"/>
<dbReference type="InParanoid" id="Q0UVC3"/>
<dbReference type="OMA" id="VGSHSQF"/>
<dbReference type="Proteomes" id="UP000001055">
    <property type="component" value="Unassembled WGS sequence"/>
</dbReference>
<dbReference type="GO" id="GO:0005737">
    <property type="term" value="C:cytoplasm"/>
    <property type="evidence" value="ECO:0000318"/>
    <property type="project" value="GO_Central"/>
</dbReference>
<dbReference type="GO" id="GO:0005759">
    <property type="term" value="C:mitochondrial matrix"/>
    <property type="evidence" value="ECO:0000318"/>
    <property type="project" value="GO_Central"/>
</dbReference>
<dbReference type="GO" id="GO:0005634">
    <property type="term" value="C:nucleus"/>
    <property type="evidence" value="ECO:0007669"/>
    <property type="project" value="UniProtKB-SubCell"/>
</dbReference>
<dbReference type="GO" id="GO:0052906">
    <property type="term" value="F:tRNA (guanine(37)-N1)-methyltransferase activity"/>
    <property type="evidence" value="ECO:0007669"/>
    <property type="project" value="UniProtKB-UniRule"/>
</dbReference>
<dbReference type="GO" id="GO:0008175">
    <property type="term" value="F:tRNA methyltransferase activity"/>
    <property type="evidence" value="ECO:0000318"/>
    <property type="project" value="GO_Central"/>
</dbReference>
<dbReference type="GO" id="GO:0070901">
    <property type="term" value="P:mitochondrial tRNA methylation"/>
    <property type="evidence" value="ECO:0000318"/>
    <property type="project" value="GO_Central"/>
</dbReference>
<dbReference type="GO" id="GO:0002939">
    <property type="term" value="P:tRNA N1-guanine methylation"/>
    <property type="evidence" value="ECO:0000318"/>
    <property type="project" value="GO_Central"/>
</dbReference>
<dbReference type="FunFam" id="3.30.300.110:FF:000001">
    <property type="entry name" value="tRNA (guanine(37)-N1)-methyltransferase"/>
    <property type="match status" value="1"/>
</dbReference>
<dbReference type="Gene3D" id="3.30.300.110">
    <property type="entry name" value="Met-10+ protein-like domains"/>
    <property type="match status" value="1"/>
</dbReference>
<dbReference type="Gene3D" id="3.40.50.150">
    <property type="entry name" value="Vaccinia Virus protein VP39"/>
    <property type="match status" value="1"/>
</dbReference>
<dbReference type="HAMAP" id="MF_03152">
    <property type="entry name" value="TRM5"/>
    <property type="match status" value="1"/>
</dbReference>
<dbReference type="InterPro" id="IPR030382">
    <property type="entry name" value="MeTrfase_TRM5/TYW2"/>
</dbReference>
<dbReference type="InterPro" id="IPR029063">
    <property type="entry name" value="SAM-dependent_MTases_sf"/>
</dbReference>
<dbReference type="InterPro" id="IPR056743">
    <property type="entry name" value="TRM5-TYW2-like_MTfase"/>
</dbReference>
<dbReference type="InterPro" id="IPR056744">
    <property type="entry name" value="TRM5/TYW2-like_N"/>
</dbReference>
<dbReference type="InterPro" id="IPR025792">
    <property type="entry name" value="tRNA_Gua_MeTrfase_euk"/>
</dbReference>
<dbReference type="PANTHER" id="PTHR23245:SF36">
    <property type="entry name" value="TRNA (GUANINE(37)-N1)-METHYLTRANSFERASE"/>
    <property type="match status" value="1"/>
</dbReference>
<dbReference type="PANTHER" id="PTHR23245">
    <property type="entry name" value="TRNA METHYLTRANSFERASE"/>
    <property type="match status" value="1"/>
</dbReference>
<dbReference type="Pfam" id="PF02475">
    <property type="entry name" value="TRM5-TYW2_MTfase"/>
    <property type="match status" value="1"/>
</dbReference>
<dbReference type="Pfam" id="PF25133">
    <property type="entry name" value="TYW2_N_2"/>
    <property type="match status" value="1"/>
</dbReference>
<dbReference type="SUPFAM" id="SSF53335">
    <property type="entry name" value="S-adenosyl-L-methionine-dependent methyltransferases"/>
    <property type="match status" value="1"/>
</dbReference>
<dbReference type="PROSITE" id="PS51684">
    <property type="entry name" value="SAM_MT_TRM5_TYW2"/>
    <property type="match status" value="1"/>
</dbReference>